<proteinExistence type="inferred from homology"/>
<sequence>MVEDILAPGLRVVFCGINPGLSSAGTGFPFAHPANRFWKVIYQAGFTDRQLKPQEAQHLLDYRCGVTKLVDRPTVQANEVSKQELHAGGRKLIEKIEDYQPQALAILGKQAYEQGFSQRGAQWGKQTLTIGSTQIWVLPNPSGLSRVSLEKLVEAYRELDQALVVRGR</sequence>
<protein>
    <recommendedName>
        <fullName evidence="1">G/U mismatch-specific DNA glycosylase</fullName>
        <ecNumber evidence="1">3.2.2.28</ecNumber>
    </recommendedName>
    <alternativeName>
        <fullName evidence="1">Double-strand-specific uracil glycosylase</fullName>
    </alternativeName>
    <alternativeName>
        <fullName evidence="1">Mismatch-specific uracil DNA-glycosylase</fullName>
        <shortName evidence="1">MUG</shortName>
    </alternativeName>
</protein>
<evidence type="ECO:0000255" key="1">
    <source>
        <dbReference type="HAMAP-Rule" id="MF_01956"/>
    </source>
</evidence>
<comment type="function">
    <text evidence="1">Excises ethenocytosine and uracil, which can arise by alkylation or deamination of cytosine, respectively, from the corresponding mispairs with guanine in ds-DNA. It is capable of hydrolyzing the carbon-nitrogen bond between the sugar-phosphate backbone of the DNA and the mispaired base. The complementary strand guanine functions in substrate recognition. Required for DNA damage lesion repair in stationary-phase cells.</text>
</comment>
<comment type="catalytic activity">
    <reaction evidence="1">
        <text>Specifically hydrolyzes mismatched double-stranded DNA and polynucleotides, releasing free uracil.</text>
        <dbReference type="EC" id="3.2.2.28"/>
    </reaction>
</comment>
<comment type="subunit">
    <text evidence="1">Binds DNA as a monomer.</text>
</comment>
<comment type="subcellular location">
    <subcellularLocation>
        <location evidence="1">Cytoplasm</location>
    </subcellularLocation>
</comment>
<comment type="similarity">
    <text evidence="1">Belongs to the uracil-DNA glycosylase (UDG) superfamily. TDG/mug family.</text>
</comment>
<feature type="chain" id="PRO_0000185775" description="G/U mismatch-specific DNA glycosylase">
    <location>
        <begin position="1"/>
        <end position="168"/>
    </location>
</feature>
<dbReference type="EC" id="3.2.2.28" evidence="1"/>
<dbReference type="EMBL" id="AE014075">
    <property type="protein sequence ID" value="AAN82267.1"/>
    <property type="molecule type" value="Genomic_DNA"/>
</dbReference>
<dbReference type="RefSeq" id="WP_000228937.1">
    <property type="nucleotide sequence ID" value="NZ_CP051263.1"/>
</dbReference>
<dbReference type="SMR" id="P0A9H2"/>
<dbReference type="STRING" id="199310.c3822"/>
<dbReference type="GeneID" id="93778924"/>
<dbReference type="KEGG" id="ecc:c3822"/>
<dbReference type="eggNOG" id="COG3663">
    <property type="taxonomic scope" value="Bacteria"/>
</dbReference>
<dbReference type="HOGENOM" id="CLU_042829_3_1_6"/>
<dbReference type="BioCyc" id="ECOL199310:C3822-MONOMER"/>
<dbReference type="Proteomes" id="UP000001410">
    <property type="component" value="Chromosome"/>
</dbReference>
<dbReference type="GO" id="GO:0005737">
    <property type="term" value="C:cytoplasm"/>
    <property type="evidence" value="ECO:0007669"/>
    <property type="project" value="UniProtKB-SubCell"/>
</dbReference>
<dbReference type="GO" id="GO:0003677">
    <property type="term" value="F:DNA binding"/>
    <property type="evidence" value="ECO:0007669"/>
    <property type="project" value="UniProtKB-KW"/>
</dbReference>
<dbReference type="GO" id="GO:0008263">
    <property type="term" value="F:pyrimidine-specific mismatch base pair DNA N-glycosylase activity"/>
    <property type="evidence" value="ECO:0007669"/>
    <property type="project" value="UniProtKB-UniRule"/>
</dbReference>
<dbReference type="GO" id="GO:0004844">
    <property type="term" value="F:uracil DNA N-glycosylase activity"/>
    <property type="evidence" value="ECO:0007669"/>
    <property type="project" value="TreeGrafter"/>
</dbReference>
<dbReference type="GO" id="GO:0006285">
    <property type="term" value="P:base-excision repair, AP site formation"/>
    <property type="evidence" value="ECO:0007669"/>
    <property type="project" value="UniProtKB-UniRule"/>
</dbReference>
<dbReference type="CDD" id="cd10028">
    <property type="entry name" value="UDG-F2_TDG_MUG"/>
    <property type="match status" value="1"/>
</dbReference>
<dbReference type="FunFam" id="3.40.470.10:FF:000003">
    <property type="entry name" value="G/U mismatch-specific DNA glycosylase"/>
    <property type="match status" value="1"/>
</dbReference>
<dbReference type="Gene3D" id="3.40.470.10">
    <property type="entry name" value="Uracil-DNA glycosylase-like domain"/>
    <property type="match status" value="1"/>
</dbReference>
<dbReference type="HAMAP" id="MF_01956">
    <property type="entry name" value="MUG"/>
    <property type="match status" value="1"/>
</dbReference>
<dbReference type="InterPro" id="IPR015637">
    <property type="entry name" value="MUG/TDG"/>
</dbReference>
<dbReference type="InterPro" id="IPR023502">
    <property type="entry name" value="MUG_bact"/>
</dbReference>
<dbReference type="InterPro" id="IPR005122">
    <property type="entry name" value="Uracil-DNA_glycosylase-like"/>
</dbReference>
<dbReference type="InterPro" id="IPR036895">
    <property type="entry name" value="Uracil-DNA_glycosylase-like_sf"/>
</dbReference>
<dbReference type="NCBIfam" id="NF007570">
    <property type="entry name" value="PRK10201.1"/>
    <property type="match status" value="1"/>
</dbReference>
<dbReference type="PANTHER" id="PTHR12159">
    <property type="entry name" value="G/T AND G/U MISMATCH-SPECIFIC DNA GLYCOSYLASE"/>
    <property type="match status" value="1"/>
</dbReference>
<dbReference type="PANTHER" id="PTHR12159:SF9">
    <property type="entry name" value="G_T MISMATCH-SPECIFIC THYMINE DNA GLYCOSYLASE"/>
    <property type="match status" value="1"/>
</dbReference>
<dbReference type="Pfam" id="PF03167">
    <property type="entry name" value="UDG"/>
    <property type="match status" value="1"/>
</dbReference>
<dbReference type="SUPFAM" id="SSF52141">
    <property type="entry name" value="Uracil-DNA glycosylase-like"/>
    <property type="match status" value="1"/>
</dbReference>
<gene>
    <name evidence="1" type="primary">mug</name>
    <name type="ordered locus">c3822</name>
</gene>
<accession>P0A9H2</accession>
<accession>P43342</accession>
<organism>
    <name type="scientific">Escherichia coli O6:H1 (strain CFT073 / ATCC 700928 / UPEC)</name>
    <dbReference type="NCBI Taxonomy" id="199310"/>
    <lineage>
        <taxon>Bacteria</taxon>
        <taxon>Pseudomonadati</taxon>
        <taxon>Pseudomonadota</taxon>
        <taxon>Gammaproteobacteria</taxon>
        <taxon>Enterobacterales</taxon>
        <taxon>Enterobacteriaceae</taxon>
        <taxon>Escherichia</taxon>
    </lineage>
</organism>
<reference key="1">
    <citation type="journal article" date="2002" name="Proc. Natl. Acad. Sci. U.S.A.">
        <title>Extensive mosaic structure revealed by the complete genome sequence of uropathogenic Escherichia coli.</title>
        <authorList>
            <person name="Welch R.A."/>
            <person name="Burland V."/>
            <person name="Plunkett G. III"/>
            <person name="Redford P."/>
            <person name="Roesch P."/>
            <person name="Rasko D."/>
            <person name="Buckles E.L."/>
            <person name="Liou S.-R."/>
            <person name="Boutin A."/>
            <person name="Hackett J."/>
            <person name="Stroud D."/>
            <person name="Mayhew G.F."/>
            <person name="Rose D.J."/>
            <person name="Zhou S."/>
            <person name="Schwartz D.C."/>
            <person name="Perna N.T."/>
            <person name="Mobley H.L.T."/>
            <person name="Donnenberg M.S."/>
            <person name="Blattner F.R."/>
        </authorList>
    </citation>
    <scope>NUCLEOTIDE SEQUENCE [LARGE SCALE GENOMIC DNA]</scope>
    <source>
        <strain>CFT073 / ATCC 700928 / UPEC</strain>
    </source>
</reference>
<name>MUG_ECOL6</name>
<keyword id="KW-0963">Cytoplasm</keyword>
<keyword id="KW-0227">DNA damage</keyword>
<keyword id="KW-0228">DNA excision</keyword>
<keyword id="KW-0234">DNA repair</keyword>
<keyword id="KW-0238">DNA-binding</keyword>
<keyword id="KW-0378">Hydrolase</keyword>
<keyword id="KW-1185">Reference proteome</keyword>